<protein>
    <recommendedName>
        <fullName>Unknown protein from 2D-PAGE of needles</fullName>
    </recommendedName>
    <alternativeName>
        <fullName>N150/N151</fullName>
    </alternativeName>
    <alternativeName>
        <fullName>S1247/S1248</fullName>
    </alternativeName>
</protein>
<comment type="miscellaneous">
    <text>On the 2D-gel the determined pI of this unknown protein is: 5.5, its MW is: 62 kDa.</text>
</comment>
<reference key="1">
    <citation type="journal article" date="1997" name="Silvae Genet.">
        <title>Genetic analysis of needle proteins in maritime pine. 1. Mapping dominant and codominant protein markers assayed on diploid tissue, in a haploid-based genetic map.</title>
        <authorList>
            <person name="Plomion C."/>
            <person name="Costa P."/>
            <person name="Bahrman N."/>
            <person name="Frigerio J.-M."/>
        </authorList>
    </citation>
    <scope>PROTEIN SEQUENCE</scope>
    <source>
        <tissue>Needle</tissue>
    </source>
</reference>
<reference key="2">
    <citation type="journal article" date="1999" name="Electrophoresis">
        <title>Separation and characterization of needle and xylem maritime pine proteins.</title>
        <authorList>
            <person name="Costa P."/>
            <person name="Pionneau C."/>
            <person name="Bauw G."/>
            <person name="Dubos C."/>
            <person name="Bahrman N."/>
            <person name="Kremer A."/>
            <person name="Frigerio J.-M."/>
            <person name="Plomion C."/>
        </authorList>
    </citation>
    <scope>PROTEIN SEQUENCE</scope>
    <source>
        <tissue>Needle</tissue>
    </source>
</reference>
<organism>
    <name type="scientific">Pinus pinaster</name>
    <name type="common">Maritime pine</name>
    <dbReference type="NCBI Taxonomy" id="71647"/>
    <lineage>
        <taxon>Eukaryota</taxon>
        <taxon>Viridiplantae</taxon>
        <taxon>Streptophyta</taxon>
        <taxon>Embryophyta</taxon>
        <taxon>Tracheophyta</taxon>
        <taxon>Spermatophyta</taxon>
        <taxon>Pinopsida</taxon>
        <taxon>Pinidae</taxon>
        <taxon>Conifers I</taxon>
        <taxon>Pinales</taxon>
        <taxon>Pinaceae</taxon>
        <taxon>Pinus</taxon>
        <taxon>Pinus subgen. Pinus</taxon>
    </lineage>
</organism>
<accession>P81106</accession>
<keyword id="KW-0903">Direct protein sequencing</keyword>
<feature type="chain" id="PRO_0000055553" description="Unknown protein from 2D-PAGE of needles">
    <location>
        <begin position="1" status="less than"/>
        <end position="15" status="greater than"/>
    </location>
</feature>
<feature type="non-terminal residue">
    <location>
        <position position="1"/>
    </location>
</feature>
<feature type="non-terminal residue">
    <location>
        <position position="15"/>
    </location>
</feature>
<name>UN01_PINPS</name>
<sequence>HEEQITQPSATNDEA</sequence>
<proteinExistence type="evidence at protein level"/>